<name>HUTI_SHEPA</name>
<accession>A8HA94</accession>
<feature type="chain" id="PRO_1000079830" description="Imidazolonepropionase">
    <location>
        <begin position="1"/>
        <end position="414"/>
    </location>
</feature>
<feature type="binding site" evidence="1">
    <location>
        <position position="73"/>
    </location>
    <ligand>
        <name>Fe(3+)</name>
        <dbReference type="ChEBI" id="CHEBI:29034"/>
    </ligand>
</feature>
<feature type="binding site" evidence="1">
    <location>
        <position position="73"/>
    </location>
    <ligand>
        <name>Zn(2+)</name>
        <dbReference type="ChEBI" id="CHEBI:29105"/>
    </ligand>
</feature>
<feature type="binding site" evidence="1">
    <location>
        <position position="75"/>
    </location>
    <ligand>
        <name>Fe(3+)</name>
        <dbReference type="ChEBI" id="CHEBI:29034"/>
    </ligand>
</feature>
<feature type="binding site" evidence="1">
    <location>
        <position position="75"/>
    </location>
    <ligand>
        <name>Zn(2+)</name>
        <dbReference type="ChEBI" id="CHEBI:29105"/>
    </ligand>
</feature>
<feature type="binding site" evidence="1">
    <location>
        <position position="82"/>
    </location>
    <ligand>
        <name>4-imidazolone-5-propanoate</name>
        <dbReference type="ChEBI" id="CHEBI:77893"/>
    </ligand>
</feature>
<feature type="binding site" evidence="1">
    <location>
        <position position="145"/>
    </location>
    <ligand>
        <name>4-imidazolone-5-propanoate</name>
        <dbReference type="ChEBI" id="CHEBI:77893"/>
    </ligand>
</feature>
<feature type="binding site" evidence="1">
    <location>
        <position position="145"/>
    </location>
    <ligand>
        <name>N-formimidoyl-L-glutamate</name>
        <dbReference type="ChEBI" id="CHEBI:58928"/>
    </ligand>
</feature>
<feature type="binding site" evidence="1">
    <location>
        <position position="178"/>
    </location>
    <ligand>
        <name>4-imidazolone-5-propanoate</name>
        <dbReference type="ChEBI" id="CHEBI:77893"/>
    </ligand>
</feature>
<feature type="binding site" evidence="1">
    <location>
        <position position="249"/>
    </location>
    <ligand>
        <name>Fe(3+)</name>
        <dbReference type="ChEBI" id="CHEBI:29034"/>
    </ligand>
</feature>
<feature type="binding site" evidence="1">
    <location>
        <position position="249"/>
    </location>
    <ligand>
        <name>Zn(2+)</name>
        <dbReference type="ChEBI" id="CHEBI:29105"/>
    </ligand>
</feature>
<feature type="binding site" evidence="1">
    <location>
        <position position="252"/>
    </location>
    <ligand>
        <name>4-imidazolone-5-propanoate</name>
        <dbReference type="ChEBI" id="CHEBI:77893"/>
    </ligand>
</feature>
<feature type="binding site" evidence="1">
    <location>
        <position position="324"/>
    </location>
    <ligand>
        <name>Fe(3+)</name>
        <dbReference type="ChEBI" id="CHEBI:29034"/>
    </ligand>
</feature>
<feature type="binding site" evidence="1">
    <location>
        <position position="324"/>
    </location>
    <ligand>
        <name>Zn(2+)</name>
        <dbReference type="ChEBI" id="CHEBI:29105"/>
    </ligand>
</feature>
<feature type="binding site" evidence="1">
    <location>
        <position position="326"/>
    </location>
    <ligand>
        <name>N-formimidoyl-L-glutamate</name>
        <dbReference type="ChEBI" id="CHEBI:58928"/>
    </ligand>
</feature>
<feature type="binding site" evidence="1">
    <location>
        <position position="328"/>
    </location>
    <ligand>
        <name>N-formimidoyl-L-glutamate</name>
        <dbReference type="ChEBI" id="CHEBI:58928"/>
    </ligand>
</feature>
<feature type="binding site" evidence="1">
    <location>
        <position position="329"/>
    </location>
    <ligand>
        <name>4-imidazolone-5-propanoate</name>
        <dbReference type="ChEBI" id="CHEBI:77893"/>
    </ligand>
</feature>
<protein>
    <recommendedName>
        <fullName evidence="1">Imidazolonepropionase</fullName>
        <ecNumber evidence="1">3.5.2.7</ecNumber>
    </recommendedName>
    <alternativeName>
        <fullName evidence="1">Imidazolone-5-propionate hydrolase</fullName>
    </alternativeName>
</protein>
<keyword id="KW-0963">Cytoplasm</keyword>
<keyword id="KW-0369">Histidine metabolism</keyword>
<keyword id="KW-0378">Hydrolase</keyword>
<keyword id="KW-0408">Iron</keyword>
<keyword id="KW-0479">Metal-binding</keyword>
<keyword id="KW-1185">Reference proteome</keyword>
<keyword id="KW-0862">Zinc</keyword>
<evidence type="ECO:0000255" key="1">
    <source>
        <dbReference type="HAMAP-Rule" id="MF_00372"/>
    </source>
</evidence>
<sequence>MSWDQVWIDINIATMSPNISEPYGAITDAALAVQDGKIAWVGKRSDLPEFDVFATPIYKGKGGWITPGLIDAHTHLVFAGNRANEFELRLNGASYEEIARSGGGIISTVNACREADEAELFELGRQRLNALAKEGVTTVEIKSGYGLDIETELKILRVARELGKHHHVDVKTTFLGAHAIPPEYKDSPGSTERSDAYVDLVINEMLPKVIAENLADAVDVFCENIAFNLEQTERVLSAAKDAGLDIKLHAEQLSNMGGSAMAARLGAKSVDHIEYLDEDGVKALSESGTCATILPGAFYFLRETQHPPIDLLRKYKVPMVVASDYNPGSSPLCSSLLMLNMACTLLRLTPEEALAGMTRNAAKALGIEDQVGVIEVGMTADFCMWNISTPAELAYTYGVASCVDVVKNGHLVHQ</sequence>
<dbReference type="EC" id="3.5.2.7" evidence="1"/>
<dbReference type="EMBL" id="CP000851">
    <property type="protein sequence ID" value="ABV89481.1"/>
    <property type="molecule type" value="Genomic_DNA"/>
</dbReference>
<dbReference type="RefSeq" id="WP_012157359.1">
    <property type="nucleotide sequence ID" value="NC_009901.1"/>
</dbReference>
<dbReference type="SMR" id="A8HA94"/>
<dbReference type="STRING" id="398579.Spea_4171"/>
<dbReference type="KEGG" id="spl:Spea_4171"/>
<dbReference type="eggNOG" id="COG1228">
    <property type="taxonomic scope" value="Bacteria"/>
</dbReference>
<dbReference type="HOGENOM" id="CLU_041647_0_0_6"/>
<dbReference type="OrthoDB" id="9776455at2"/>
<dbReference type="UniPathway" id="UPA00379">
    <property type="reaction ID" value="UER00551"/>
</dbReference>
<dbReference type="Proteomes" id="UP000002608">
    <property type="component" value="Chromosome"/>
</dbReference>
<dbReference type="GO" id="GO:0005737">
    <property type="term" value="C:cytoplasm"/>
    <property type="evidence" value="ECO:0007669"/>
    <property type="project" value="UniProtKB-SubCell"/>
</dbReference>
<dbReference type="GO" id="GO:0050480">
    <property type="term" value="F:imidazolonepropionase activity"/>
    <property type="evidence" value="ECO:0007669"/>
    <property type="project" value="UniProtKB-UniRule"/>
</dbReference>
<dbReference type="GO" id="GO:0005506">
    <property type="term" value="F:iron ion binding"/>
    <property type="evidence" value="ECO:0007669"/>
    <property type="project" value="UniProtKB-UniRule"/>
</dbReference>
<dbReference type="GO" id="GO:0008270">
    <property type="term" value="F:zinc ion binding"/>
    <property type="evidence" value="ECO:0007669"/>
    <property type="project" value="UniProtKB-UniRule"/>
</dbReference>
<dbReference type="GO" id="GO:0019556">
    <property type="term" value="P:L-histidine catabolic process to glutamate and formamide"/>
    <property type="evidence" value="ECO:0007669"/>
    <property type="project" value="UniProtKB-UniPathway"/>
</dbReference>
<dbReference type="GO" id="GO:0019557">
    <property type="term" value="P:L-histidine catabolic process to glutamate and formate"/>
    <property type="evidence" value="ECO:0007669"/>
    <property type="project" value="UniProtKB-UniPathway"/>
</dbReference>
<dbReference type="CDD" id="cd01296">
    <property type="entry name" value="Imidazolone-5PH"/>
    <property type="match status" value="1"/>
</dbReference>
<dbReference type="FunFam" id="3.20.20.140:FF:000007">
    <property type="entry name" value="Imidazolonepropionase"/>
    <property type="match status" value="1"/>
</dbReference>
<dbReference type="Gene3D" id="3.20.20.140">
    <property type="entry name" value="Metal-dependent hydrolases"/>
    <property type="match status" value="1"/>
</dbReference>
<dbReference type="Gene3D" id="2.30.40.10">
    <property type="entry name" value="Urease, subunit C, domain 1"/>
    <property type="match status" value="1"/>
</dbReference>
<dbReference type="HAMAP" id="MF_00372">
    <property type="entry name" value="HutI"/>
    <property type="match status" value="1"/>
</dbReference>
<dbReference type="InterPro" id="IPR006680">
    <property type="entry name" value="Amidohydro-rel"/>
</dbReference>
<dbReference type="InterPro" id="IPR005920">
    <property type="entry name" value="HutI"/>
</dbReference>
<dbReference type="InterPro" id="IPR011059">
    <property type="entry name" value="Metal-dep_hydrolase_composite"/>
</dbReference>
<dbReference type="InterPro" id="IPR032466">
    <property type="entry name" value="Metal_Hydrolase"/>
</dbReference>
<dbReference type="NCBIfam" id="TIGR01224">
    <property type="entry name" value="hutI"/>
    <property type="match status" value="1"/>
</dbReference>
<dbReference type="PANTHER" id="PTHR42752">
    <property type="entry name" value="IMIDAZOLONEPROPIONASE"/>
    <property type="match status" value="1"/>
</dbReference>
<dbReference type="PANTHER" id="PTHR42752:SF1">
    <property type="entry name" value="IMIDAZOLONEPROPIONASE-RELATED"/>
    <property type="match status" value="1"/>
</dbReference>
<dbReference type="Pfam" id="PF01979">
    <property type="entry name" value="Amidohydro_1"/>
    <property type="match status" value="1"/>
</dbReference>
<dbReference type="SUPFAM" id="SSF51338">
    <property type="entry name" value="Composite domain of metallo-dependent hydrolases"/>
    <property type="match status" value="1"/>
</dbReference>
<dbReference type="SUPFAM" id="SSF51556">
    <property type="entry name" value="Metallo-dependent hydrolases"/>
    <property type="match status" value="1"/>
</dbReference>
<comment type="function">
    <text evidence="1">Catalyzes the hydrolytic cleavage of the carbon-nitrogen bond in imidazolone-5-propanoate to yield N-formimidoyl-L-glutamate. It is the third step in the universal histidine degradation pathway.</text>
</comment>
<comment type="catalytic activity">
    <reaction evidence="1">
        <text>4-imidazolone-5-propanoate + H2O = N-formimidoyl-L-glutamate</text>
        <dbReference type="Rhea" id="RHEA:23660"/>
        <dbReference type="ChEBI" id="CHEBI:15377"/>
        <dbReference type="ChEBI" id="CHEBI:58928"/>
        <dbReference type="ChEBI" id="CHEBI:77893"/>
        <dbReference type="EC" id="3.5.2.7"/>
    </reaction>
</comment>
<comment type="cofactor">
    <cofactor evidence="1">
        <name>Zn(2+)</name>
        <dbReference type="ChEBI" id="CHEBI:29105"/>
    </cofactor>
    <cofactor evidence="1">
        <name>Fe(3+)</name>
        <dbReference type="ChEBI" id="CHEBI:29034"/>
    </cofactor>
    <text evidence="1">Binds 1 zinc or iron ion per subunit.</text>
</comment>
<comment type="pathway">
    <text evidence="1">Amino-acid degradation; L-histidine degradation into L-glutamate; N-formimidoyl-L-glutamate from L-histidine: step 3/3.</text>
</comment>
<comment type="subcellular location">
    <subcellularLocation>
        <location evidence="1">Cytoplasm</location>
    </subcellularLocation>
</comment>
<comment type="similarity">
    <text evidence="1">Belongs to the metallo-dependent hydrolases superfamily. HutI family.</text>
</comment>
<proteinExistence type="inferred from homology"/>
<gene>
    <name evidence="1" type="primary">hutI</name>
    <name type="ordered locus">Spea_4171</name>
</gene>
<reference key="1">
    <citation type="submission" date="2007-10" db="EMBL/GenBank/DDBJ databases">
        <title>Complete sequence of Shewanella pealeana ATCC 700345.</title>
        <authorList>
            <consortium name="US DOE Joint Genome Institute"/>
            <person name="Copeland A."/>
            <person name="Lucas S."/>
            <person name="Lapidus A."/>
            <person name="Barry K."/>
            <person name="Glavina del Rio T."/>
            <person name="Dalin E."/>
            <person name="Tice H."/>
            <person name="Pitluck S."/>
            <person name="Chertkov O."/>
            <person name="Brettin T."/>
            <person name="Bruce D."/>
            <person name="Detter J.C."/>
            <person name="Han C."/>
            <person name="Schmutz J."/>
            <person name="Larimer F."/>
            <person name="Land M."/>
            <person name="Hauser L."/>
            <person name="Kyrpides N."/>
            <person name="Kim E."/>
            <person name="Zhao J.-S.Z."/>
            <person name="Manno D."/>
            <person name="Hawari J."/>
            <person name="Richardson P."/>
        </authorList>
    </citation>
    <scope>NUCLEOTIDE SEQUENCE [LARGE SCALE GENOMIC DNA]</scope>
    <source>
        <strain>ATCC 700345 / ANG-SQ1</strain>
    </source>
</reference>
<organism>
    <name type="scientific">Shewanella pealeana (strain ATCC 700345 / ANG-SQ1)</name>
    <dbReference type="NCBI Taxonomy" id="398579"/>
    <lineage>
        <taxon>Bacteria</taxon>
        <taxon>Pseudomonadati</taxon>
        <taxon>Pseudomonadota</taxon>
        <taxon>Gammaproteobacteria</taxon>
        <taxon>Alteromonadales</taxon>
        <taxon>Shewanellaceae</taxon>
        <taxon>Shewanella</taxon>
    </lineage>
</organism>